<sequence length="253" mass="28610">MKLMDVRVSGLNVWITDKHILKGISFKAQPGTVTAIMGPSGSGKSTLIRVINRLIDLIPGARVEGEVWINNMNVMKEDPYNIRRYTGMVFQEPNPFPHMTIYENVAIGPKLHGLAKNKKELDEIVEWALKMAHLWDEVKDRLSDYPHQLSGGQRQRLSLARALALKPRVLLLDEPTANIDPVSTVKIEQSIVEYAKEEMATVIIVTHTPQQAARISDQILFLYEGRVIEYGPTKELVLRPRHELTKKFLGGEV</sequence>
<feature type="chain" id="PRO_0000092941" description="Phosphate import ATP-binding protein PstB">
    <location>
        <begin position="1"/>
        <end position="253"/>
    </location>
</feature>
<feature type="domain" description="ABC transporter" evidence="1">
    <location>
        <begin position="1"/>
        <end position="249"/>
    </location>
</feature>
<feature type="binding site" evidence="1">
    <location>
        <begin position="38"/>
        <end position="45"/>
    </location>
    <ligand>
        <name>ATP</name>
        <dbReference type="ChEBI" id="CHEBI:30616"/>
    </ligand>
</feature>
<proteinExistence type="inferred from homology"/>
<protein>
    <recommendedName>
        <fullName evidence="1">Phosphate import ATP-binding protein PstB</fullName>
        <ecNumber evidence="1">7.3.2.1</ecNumber>
    </recommendedName>
    <alternativeName>
        <fullName evidence="1">ABC phosphate transporter</fullName>
    </alternativeName>
    <alternativeName>
        <fullName evidence="1">Phosphate-transporting ATPase</fullName>
    </alternativeName>
</protein>
<keyword id="KW-0067">ATP-binding</keyword>
<keyword id="KW-1003">Cell membrane</keyword>
<keyword id="KW-0472">Membrane</keyword>
<keyword id="KW-0547">Nucleotide-binding</keyword>
<keyword id="KW-0592">Phosphate transport</keyword>
<keyword id="KW-1185">Reference proteome</keyword>
<keyword id="KW-1278">Translocase</keyword>
<keyword id="KW-0813">Transport</keyword>
<comment type="function">
    <text evidence="1">Part of the ABC transporter complex PstSACB involved in phosphate import. Responsible for energy coupling to the transport system.</text>
</comment>
<comment type="catalytic activity">
    <reaction evidence="1">
        <text>phosphate(out) + ATP + H2O = ADP + 2 phosphate(in) + H(+)</text>
        <dbReference type="Rhea" id="RHEA:24440"/>
        <dbReference type="ChEBI" id="CHEBI:15377"/>
        <dbReference type="ChEBI" id="CHEBI:15378"/>
        <dbReference type="ChEBI" id="CHEBI:30616"/>
        <dbReference type="ChEBI" id="CHEBI:43474"/>
        <dbReference type="ChEBI" id="CHEBI:456216"/>
        <dbReference type="EC" id="7.3.2.1"/>
    </reaction>
</comment>
<comment type="subunit">
    <text evidence="1">The complex is composed of two ATP-binding proteins (PstB), two transmembrane proteins (PstC and PstA) and a solute-binding protein (PstS).</text>
</comment>
<comment type="subcellular location">
    <subcellularLocation>
        <location evidence="1">Cell membrane</location>
        <topology evidence="1">Peripheral membrane protein</topology>
    </subcellularLocation>
</comment>
<comment type="similarity">
    <text evidence="1">Belongs to the ABC transporter superfamily. Phosphate importer (TC 3.A.1.7) family.</text>
</comment>
<gene>
    <name evidence="1" type="primary">pstB</name>
    <name type="ordered locus">APE_0050</name>
</gene>
<dbReference type="EC" id="7.3.2.1" evidence="1"/>
<dbReference type="EMBL" id="BA000002">
    <property type="protein sequence ID" value="BAA78959.1"/>
    <property type="molecule type" value="Genomic_DNA"/>
</dbReference>
<dbReference type="PIR" id="E72757">
    <property type="entry name" value="E72757"/>
</dbReference>
<dbReference type="RefSeq" id="WP_010865450.1">
    <property type="nucleotide sequence ID" value="NC_000854.2"/>
</dbReference>
<dbReference type="SMR" id="Q9YG51"/>
<dbReference type="STRING" id="272557.APE_0050"/>
<dbReference type="EnsemblBacteria" id="BAA78959">
    <property type="protein sequence ID" value="BAA78959"/>
    <property type="gene ID" value="APE_0050"/>
</dbReference>
<dbReference type="GeneID" id="1445604"/>
<dbReference type="KEGG" id="ape:APE_0050"/>
<dbReference type="PATRIC" id="fig|272557.25.peg.25"/>
<dbReference type="eggNOG" id="arCOG00231">
    <property type="taxonomic scope" value="Archaea"/>
</dbReference>
<dbReference type="Proteomes" id="UP000002518">
    <property type="component" value="Chromosome"/>
</dbReference>
<dbReference type="GO" id="GO:0005886">
    <property type="term" value="C:plasma membrane"/>
    <property type="evidence" value="ECO:0007669"/>
    <property type="project" value="UniProtKB-SubCell"/>
</dbReference>
<dbReference type="GO" id="GO:0005524">
    <property type="term" value="F:ATP binding"/>
    <property type="evidence" value="ECO:0007669"/>
    <property type="project" value="UniProtKB-KW"/>
</dbReference>
<dbReference type="GO" id="GO:0016887">
    <property type="term" value="F:ATP hydrolysis activity"/>
    <property type="evidence" value="ECO:0007669"/>
    <property type="project" value="InterPro"/>
</dbReference>
<dbReference type="GO" id="GO:0015415">
    <property type="term" value="F:ATPase-coupled phosphate ion transmembrane transporter activity"/>
    <property type="evidence" value="ECO:0007669"/>
    <property type="project" value="UniProtKB-EC"/>
</dbReference>
<dbReference type="GO" id="GO:0035435">
    <property type="term" value="P:phosphate ion transmembrane transport"/>
    <property type="evidence" value="ECO:0007669"/>
    <property type="project" value="InterPro"/>
</dbReference>
<dbReference type="CDD" id="cd03260">
    <property type="entry name" value="ABC_PstB_phosphate_transporter"/>
    <property type="match status" value="1"/>
</dbReference>
<dbReference type="Gene3D" id="3.40.50.300">
    <property type="entry name" value="P-loop containing nucleotide triphosphate hydrolases"/>
    <property type="match status" value="1"/>
</dbReference>
<dbReference type="InterPro" id="IPR003593">
    <property type="entry name" value="AAA+_ATPase"/>
</dbReference>
<dbReference type="InterPro" id="IPR003439">
    <property type="entry name" value="ABC_transporter-like_ATP-bd"/>
</dbReference>
<dbReference type="InterPro" id="IPR017871">
    <property type="entry name" value="ABC_transporter-like_CS"/>
</dbReference>
<dbReference type="InterPro" id="IPR027417">
    <property type="entry name" value="P-loop_NTPase"/>
</dbReference>
<dbReference type="InterPro" id="IPR005670">
    <property type="entry name" value="PstB-like"/>
</dbReference>
<dbReference type="PANTHER" id="PTHR43423">
    <property type="entry name" value="ABC TRANSPORTER I FAMILY MEMBER 17"/>
    <property type="match status" value="1"/>
</dbReference>
<dbReference type="PANTHER" id="PTHR43423:SF1">
    <property type="entry name" value="ABC TRANSPORTER I FAMILY MEMBER 17"/>
    <property type="match status" value="1"/>
</dbReference>
<dbReference type="Pfam" id="PF00005">
    <property type="entry name" value="ABC_tran"/>
    <property type="match status" value="1"/>
</dbReference>
<dbReference type="SMART" id="SM00382">
    <property type="entry name" value="AAA"/>
    <property type="match status" value="1"/>
</dbReference>
<dbReference type="SUPFAM" id="SSF52540">
    <property type="entry name" value="P-loop containing nucleoside triphosphate hydrolases"/>
    <property type="match status" value="1"/>
</dbReference>
<dbReference type="PROSITE" id="PS00211">
    <property type="entry name" value="ABC_TRANSPORTER_1"/>
    <property type="match status" value="1"/>
</dbReference>
<dbReference type="PROSITE" id="PS50893">
    <property type="entry name" value="ABC_TRANSPORTER_2"/>
    <property type="match status" value="1"/>
</dbReference>
<dbReference type="PROSITE" id="PS51238">
    <property type="entry name" value="PSTB"/>
    <property type="match status" value="1"/>
</dbReference>
<reference key="1">
    <citation type="journal article" date="1999" name="DNA Res.">
        <title>Complete genome sequence of an aerobic hyper-thermophilic crenarchaeon, Aeropyrum pernix K1.</title>
        <authorList>
            <person name="Kawarabayasi Y."/>
            <person name="Hino Y."/>
            <person name="Horikawa H."/>
            <person name="Yamazaki S."/>
            <person name="Haikawa Y."/>
            <person name="Jin-no K."/>
            <person name="Takahashi M."/>
            <person name="Sekine M."/>
            <person name="Baba S."/>
            <person name="Ankai A."/>
            <person name="Kosugi H."/>
            <person name="Hosoyama A."/>
            <person name="Fukui S."/>
            <person name="Nagai Y."/>
            <person name="Nishijima K."/>
            <person name="Nakazawa H."/>
            <person name="Takamiya M."/>
            <person name="Masuda S."/>
            <person name="Funahashi T."/>
            <person name="Tanaka T."/>
            <person name="Kudoh Y."/>
            <person name="Yamazaki J."/>
            <person name="Kushida N."/>
            <person name="Oguchi A."/>
            <person name="Aoki K."/>
            <person name="Kubota K."/>
            <person name="Nakamura Y."/>
            <person name="Nomura N."/>
            <person name="Sako Y."/>
            <person name="Kikuchi H."/>
        </authorList>
    </citation>
    <scope>NUCLEOTIDE SEQUENCE [LARGE SCALE GENOMIC DNA]</scope>
    <source>
        <strain>ATCC 700893 / DSM 11879 / JCM 9820 / NBRC 100138 / K1</strain>
    </source>
</reference>
<evidence type="ECO:0000255" key="1">
    <source>
        <dbReference type="HAMAP-Rule" id="MF_01702"/>
    </source>
</evidence>
<name>PSTB_AERPE</name>
<accession>Q9YG51</accession>
<organism>
    <name type="scientific">Aeropyrum pernix (strain ATCC 700893 / DSM 11879 / JCM 9820 / NBRC 100138 / K1)</name>
    <dbReference type="NCBI Taxonomy" id="272557"/>
    <lineage>
        <taxon>Archaea</taxon>
        <taxon>Thermoproteota</taxon>
        <taxon>Thermoprotei</taxon>
        <taxon>Desulfurococcales</taxon>
        <taxon>Desulfurococcaceae</taxon>
        <taxon>Aeropyrum</taxon>
    </lineage>
</organism>